<feature type="chain" id="PRO_1000074495" description="Crossover junction endodeoxyribonuclease RuvC">
    <location>
        <begin position="1"/>
        <end position="193"/>
    </location>
</feature>
<feature type="active site" evidence="1">
    <location>
        <position position="7"/>
    </location>
</feature>
<feature type="active site" evidence="1">
    <location>
        <position position="68"/>
    </location>
</feature>
<feature type="active site" evidence="1">
    <location>
        <position position="141"/>
    </location>
</feature>
<feature type="binding site" evidence="1">
    <location>
        <position position="7"/>
    </location>
    <ligand>
        <name>Mg(2+)</name>
        <dbReference type="ChEBI" id="CHEBI:18420"/>
        <label>1</label>
    </ligand>
</feature>
<feature type="binding site" evidence="1">
    <location>
        <position position="68"/>
    </location>
    <ligand>
        <name>Mg(2+)</name>
        <dbReference type="ChEBI" id="CHEBI:18420"/>
        <label>2</label>
    </ligand>
</feature>
<feature type="binding site" evidence="1">
    <location>
        <position position="141"/>
    </location>
    <ligand>
        <name>Mg(2+)</name>
        <dbReference type="ChEBI" id="CHEBI:18420"/>
        <label>1</label>
    </ligand>
</feature>
<dbReference type="EC" id="3.1.21.10" evidence="1"/>
<dbReference type="EMBL" id="CP000910">
    <property type="protein sequence ID" value="ABY23734.1"/>
    <property type="molecule type" value="Genomic_DNA"/>
</dbReference>
<dbReference type="RefSeq" id="WP_012245404.1">
    <property type="nucleotide sequence ID" value="NC_010168.1"/>
</dbReference>
<dbReference type="SMR" id="A9WSE6"/>
<dbReference type="STRING" id="288705.RSal33209_2001"/>
<dbReference type="KEGG" id="rsa:RSal33209_2001"/>
<dbReference type="eggNOG" id="COG0817">
    <property type="taxonomic scope" value="Bacteria"/>
</dbReference>
<dbReference type="HOGENOM" id="CLU_091257_0_2_11"/>
<dbReference type="Proteomes" id="UP000002007">
    <property type="component" value="Chromosome"/>
</dbReference>
<dbReference type="GO" id="GO:0005737">
    <property type="term" value="C:cytoplasm"/>
    <property type="evidence" value="ECO:0007669"/>
    <property type="project" value="UniProtKB-SubCell"/>
</dbReference>
<dbReference type="GO" id="GO:0048476">
    <property type="term" value="C:Holliday junction resolvase complex"/>
    <property type="evidence" value="ECO:0007669"/>
    <property type="project" value="UniProtKB-UniRule"/>
</dbReference>
<dbReference type="GO" id="GO:0008821">
    <property type="term" value="F:crossover junction DNA endonuclease activity"/>
    <property type="evidence" value="ECO:0007669"/>
    <property type="project" value="UniProtKB-UniRule"/>
</dbReference>
<dbReference type="GO" id="GO:0003677">
    <property type="term" value="F:DNA binding"/>
    <property type="evidence" value="ECO:0007669"/>
    <property type="project" value="UniProtKB-KW"/>
</dbReference>
<dbReference type="GO" id="GO:0000287">
    <property type="term" value="F:magnesium ion binding"/>
    <property type="evidence" value="ECO:0007669"/>
    <property type="project" value="UniProtKB-UniRule"/>
</dbReference>
<dbReference type="GO" id="GO:0006310">
    <property type="term" value="P:DNA recombination"/>
    <property type="evidence" value="ECO:0007669"/>
    <property type="project" value="UniProtKB-UniRule"/>
</dbReference>
<dbReference type="GO" id="GO:0006281">
    <property type="term" value="P:DNA repair"/>
    <property type="evidence" value="ECO:0007669"/>
    <property type="project" value="UniProtKB-UniRule"/>
</dbReference>
<dbReference type="CDD" id="cd16962">
    <property type="entry name" value="RuvC"/>
    <property type="match status" value="1"/>
</dbReference>
<dbReference type="FunFam" id="3.30.420.10:FF:000002">
    <property type="entry name" value="Crossover junction endodeoxyribonuclease RuvC"/>
    <property type="match status" value="1"/>
</dbReference>
<dbReference type="Gene3D" id="3.30.420.10">
    <property type="entry name" value="Ribonuclease H-like superfamily/Ribonuclease H"/>
    <property type="match status" value="1"/>
</dbReference>
<dbReference type="HAMAP" id="MF_00034">
    <property type="entry name" value="RuvC"/>
    <property type="match status" value="1"/>
</dbReference>
<dbReference type="InterPro" id="IPR012337">
    <property type="entry name" value="RNaseH-like_sf"/>
</dbReference>
<dbReference type="InterPro" id="IPR036397">
    <property type="entry name" value="RNaseH_sf"/>
</dbReference>
<dbReference type="InterPro" id="IPR020563">
    <property type="entry name" value="X-over_junc_endoDNase_Mg_BS"/>
</dbReference>
<dbReference type="InterPro" id="IPR002176">
    <property type="entry name" value="X-over_junc_endoDNase_RuvC"/>
</dbReference>
<dbReference type="NCBIfam" id="TIGR00228">
    <property type="entry name" value="ruvC"/>
    <property type="match status" value="1"/>
</dbReference>
<dbReference type="PANTHER" id="PTHR30194">
    <property type="entry name" value="CROSSOVER JUNCTION ENDODEOXYRIBONUCLEASE RUVC"/>
    <property type="match status" value="1"/>
</dbReference>
<dbReference type="PANTHER" id="PTHR30194:SF3">
    <property type="entry name" value="CROSSOVER JUNCTION ENDODEOXYRIBONUCLEASE RUVC"/>
    <property type="match status" value="1"/>
</dbReference>
<dbReference type="Pfam" id="PF02075">
    <property type="entry name" value="RuvC"/>
    <property type="match status" value="1"/>
</dbReference>
<dbReference type="PRINTS" id="PR00696">
    <property type="entry name" value="RSOLVASERUVC"/>
</dbReference>
<dbReference type="SUPFAM" id="SSF53098">
    <property type="entry name" value="Ribonuclease H-like"/>
    <property type="match status" value="1"/>
</dbReference>
<dbReference type="PROSITE" id="PS01321">
    <property type="entry name" value="RUVC"/>
    <property type="match status" value="1"/>
</dbReference>
<protein>
    <recommendedName>
        <fullName evidence="1">Crossover junction endodeoxyribonuclease RuvC</fullName>
        <ecNumber evidence="1">3.1.21.10</ecNumber>
    </recommendedName>
    <alternativeName>
        <fullName evidence="1">Holliday junction nuclease RuvC</fullName>
    </alternativeName>
    <alternativeName>
        <fullName evidence="1">Holliday junction resolvase RuvC</fullName>
    </alternativeName>
</protein>
<name>RUVC_RENSM</name>
<accession>A9WSE6</accession>
<sequence>MRVFGVDPGLTRCGFGVVDVAANRSASLVAVGVIGSSSELPLSQRLLVISESIDQWLDTHSPDVLAVERVFSQTNLSTVMGVAQASGIVIAAAAKRGIAVALHTPSEVKAAVTGNGRADKIAVTAMVTRILKLKVAPTPADAADALALAITHAWRSGPGSTAAAGELTPARKLWLEAEAKARKNVEKSSKQRR</sequence>
<keyword id="KW-0963">Cytoplasm</keyword>
<keyword id="KW-0227">DNA damage</keyword>
<keyword id="KW-0233">DNA recombination</keyword>
<keyword id="KW-0234">DNA repair</keyword>
<keyword id="KW-0238">DNA-binding</keyword>
<keyword id="KW-0255">Endonuclease</keyword>
<keyword id="KW-0378">Hydrolase</keyword>
<keyword id="KW-0460">Magnesium</keyword>
<keyword id="KW-0479">Metal-binding</keyword>
<keyword id="KW-0540">Nuclease</keyword>
<keyword id="KW-1185">Reference proteome</keyword>
<proteinExistence type="inferred from homology"/>
<gene>
    <name evidence="1" type="primary">ruvC</name>
    <name type="ordered locus">RSal33209_2001</name>
</gene>
<organism>
    <name type="scientific">Renibacterium salmoninarum (strain ATCC 33209 / DSM 20767 / JCM 11484 / NBRC 15589 / NCIMB 2235)</name>
    <dbReference type="NCBI Taxonomy" id="288705"/>
    <lineage>
        <taxon>Bacteria</taxon>
        <taxon>Bacillati</taxon>
        <taxon>Actinomycetota</taxon>
        <taxon>Actinomycetes</taxon>
        <taxon>Micrococcales</taxon>
        <taxon>Micrococcaceae</taxon>
        <taxon>Renibacterium</taxon>
    </lineage>
</organism>
<evidence type="ECO:0000255" key="1">
    <source>
        <dbReference type="HAMAP-Rule" id="MF_00034"/>
    </source>
</evidence>
<reference key="1">
    <citation type="journal article" date="2008" name="J. Bacteriol.">
        <title>Genome sequence of the fish pathogen Renibacterium salmoninarum suggests reductive evolution away from an environmental Arthrobacter ancestor.</title>
        <authorList>
            <person name="Wiens G.D."/>
            <person name="Rockey D.D."/>
            <person name="Wu Z."/>
            <person name="Chang J."/>
            <person name="Levy R."/>
            <person name="Crane S."/>
            <person name="Chen D.S."/>
            <person name="Capri G.R."/>
            <person name="Burnett J.R."/>
            <person name="Sudheesh P.S."/>
            <person name="Schipma M.J."/>
            <person name="Burd H."/>
            <person name="Bhattacharyya A."/>
            <person name="Rhodes L.D."/>
            <person name="Kaul R."/>
            <person name="Strom M.S."/>
        </authorList>
    </citation>
    <scope>NUCLEOTIDE SEQUENCE [LARGE SCALE GENOMIC DNA]</scope>
    <source>
        <strain>ATCC 33209 / DSM 20767 / JCM 11484 / NBRC 15589 / NCIMB 2235</strain>
    </source>
</reference>
<comment type="function">
    <text evidence="1">The RuvA-RuvB-RuvC complex processes Holliday junction (HJ) DNA during genetic recombination and DNA repair. Endonuclease that resolves HJ intermediates. Cleaves cruciform DNA by making single-stranded nicks across the HJ at symmetrical positions within the homologous arms, yielding a 5'-phosphate and a 3'-hydroxyl group; requires a central core of homology in the junction. The consensus cleavage sequence is 5'-(A/T)TT(C/G)-3'. Cleavage occurs on the 3'-side of the TT dinucleotide at the point of strand exchange. HJ branch migration catalyzed by RuvA-RuvB allows RuvC to scan DNA until it finds its consensus sequence, where it cleaves and resolves the cruciform DNA.</text>
</comment>
<comment type="catalytic activity">
    <reaction evidence="1">
        <text>Endonucleolytic cleavage at a junction such as a reciprocal single-stranded crossover between two homologous DNA duplexes (Holliday junction).</text>
        <dbReference type="EC" id="3.1.21.10"/>
    </reaction>
</comment>
<comment type="cofactor">
    <cofactor evidence="1">
        <name>Mg(2+)</name>
        <dbReference type="ChEBI" id="CHEBI:18420"/>
    </cofactor>
    <text evidence="1">Binds 2 Mg(2+) ion per subunit.</text>
</comment>
<comment type="subunit">
    <text evidence="1">Homodimer which binds Holliday junction (HJ) DNA. The HJ becomes 2-fold symmetrical on binding to RuvC with unstacked arms; it has a different conformation from HJ DNA in complex with RuvA. In the full resolvosome a probable DNA-RuvA(4)-RuvB(12)-RuvC(2) complex forms which resolves the HJ.</text>
</comment>
<comment type="subcellular location">
    <subcellularLocation>
        <location evidence="1">Cytoplasm</location>
    </subcellularLocation>
</comment>
<comment type="similarity">
    <text evidence="1">Belongs to the RuvC family.</text>
</comment>